<keyword id="KW-0004">4Fe-4S</keyword>
<keyword id="KW-0997">Cell inner membrane</keyword>
<keyword id="KW-1003">Cell membrane</keyword>
<keyword id="KW-0249">Electron transport</keyword>
<keyword id="KW-0408">Iron</keyword>
<keyword id="KW-0411">Iron-sulfur</keyword>
<keyword id="KW-0472">Membrane</keyword>
<keyword id="KW-0479">Metal-binding</keyword>
<keyword id="KW-1185">Reference proteome</keyword>
<keyword id="KW-0677">Repeat</keyword>
<keyword id="KW-1278">Translocase</keyword>
<keyword id="KW-0813">Transport</keyword>
<dbReference type="EC" id="7.-.-.-" evidence="1"/>
<dbReference type="EMBL" id="AM406670">
    <property type="protein sequence ID" value="CAL94057.1"/>
    <property type="molecule type" value="Genomic_DNA"/>
</dbReference>
<dbReference type="RefSeq" id="WP_011765173.1">
    <property type="nucleotide sequence ID" value="NC_008702.1"/>
</dbReference>
<dbReference type="STRING" id="62928.azo1440"/>
<dbReference type="KEGG" id="aoa:dqs_1564"/>
<dbReference type="KEGG" id="azo:azo1440"/>
<dbReference type="eggNOG" id="COG2878">
    <property type="taxonomic scope" value="Bacteria"/>
</dbReference>
<dbReference type="HOGENOM" id="CLU_063448_2_0_4"/>
<dbReference type="OrthoDB" id="9789936at2"/>
<dbReference type="BRENDA" id="7.1.1.11">
    <property type="organism ID" value="15971"/>
</dbReference>
<dbReference type="Proteomes" id="UP000002588">
    <property type="component" value="Chromosome"/>
</dbReference>
<dbReference type="GO" id="GO:0005886">
    <property type="term" value="C:plasma membrane"/>
    <property type="evidence" value="ECO:0007669"/>
    <property type="project" value="UniProtKB-SubCell"/>
</dbReference>
<dbReference type="GO" id="GO:0051539">
    <property type="term" value="F:4 iron, 4 sulfur cluster binding"/>
    <property type="evidence" value="ECO:0007669"/>
    <property type="project" value="UniProtKB-UniRule"/>
</dbReference>
<dbReference type="GO" id="GO:0009055">
    <property type="term" value="F:electron transfer activity"/>
    <property type="evidence" value="ECO:0007669"/>
    <property type="project" value="InterPro"/>
</dbReference>
<dbReference type="GO" id="GO:0046872">
    <property type="term" value="F:metal ion binding"/>
    <property type="evidence" value="ECO:0007669"/>
    <property type="project" value="UniProtKB-KW"/>
</dbReference>
<dbReference type="GO" id="GO:0022900">
    <property type="term" value="P:electron transport chain"/>
    <property type="evidence" value="ECO:0007669"/>
    <property type="project" value="UniProtKB-UniRule"/>
</dbReference>
<dbReference type="FunFam" id="1.10.15.40:FF:000001">
    <property type="entry name" value="Ion-translocating oxidoreductase complex subunit B"/>
    <property type="match status" value="1"/>
</dbReference>
<dbReference type="Gene3D" id="3.30.70.20">
    <property type="match status" value="1"/>
</dbReference>
<dbReference type="Gene3D" id="1.10.15.40">
    <property type="entry name" value="Electron transport complex subunit B, putative Fe-S cluster"/>
    <property type="match status" value="1"/>
</dbReference>
<dbReference type="HAMAP" id="MF_00463">
    <property type="entry name" value="RsxB_RnfB"/>
    <property type="match status" value="1"/>
</dbReference>
<dbReference type="InterPro" id="IPR007202">
    <property type="entry name" value="4Fe-4S_dom"/>
</dbReference>
<dbReference type="InterPro" id="IPR017896">
    <property type="entry name" value="4Fe4S_Fe-S-bd"/>
</dbReference>
<dbReference type="InterPro" id="IPR017900">
    <property type="entry name" value="4Fe4S_Fe_S_CS"/>
</dbReference>
<dbReference type="InterPro" id="IPR010207">
    <property type="entry name" value="Elect_transpt_cplx_RnfB/RsxB"/>
</dbReference>
<dbReference type="InterPro" id="IPR016463">
    <property type="entry name" value="RnfB/RsxB_Proteobac"/>
</dbReference>
<dbReference type="InterPro" id="IPR050294">
    <property type="entry name" value="RnfB_subfamily"/>
</dbReference>
<dbReference type="NCBIfam" id="NF003475">
    <property type="entry name" value="PRK05113.1"/>
    <property type="match status" value="1"/>
</dbReference>
<dbReference type="NCBIfam" id="TIGR01944">
    <property type="entry name" value="rnfB"/>
    <property type="match status" value="1"/>
</dbReference>
<dbReference type="PANTHER" id="PTHR42859:SF3">
    <property type="entry name" value="ION-TRANSLOCATING OXIDOREDUCTASE COMPLEX SUBUNIT B"/>
    <property type="match status" value="1"/>
</dbReference>
<dbReference type="PANTHER" id="PTHR42859">
    <property type="entry name" value="OXIDOREDUCTASE"/>
    <property type="match status" value="1"/>
</dbReference>
<dbReference type="Pfam" id="PF14697">
    <property type="entry name" value="Fer4_21"/>
    <property type="match status" value="1"/>
</dbReference>
<dbReference type="Pfam" id="PF04060">
    <property type="entry name" value="FeS"/>
    <property type="match status" value="1"/>
</dbReference>
<dbReference type="PIRSF" id="PIRSF005784">
    <property type="entry name" value="Elect_transpt_RnfB"/>
    <property type="match status" value="1"/>
</dbReference>
<dbReference type="SUPFAM" id="SSF54862">
    <property type="entry name" value="4Fe-4S ferredoxins"/>
    <property type="match status" value="1"/>
</dbReference>
<dbReference type="PROSITE" id="PS51656">
    <property type="entry name" value="4FE4S"/>
    <property type="match status" value="1"/>
</dbReference>
<dbReference type="PROSITE" id="PS00198">
    <property type="entry name" value="4FE4S_FER_1"/>
    <property type="match status" value="2"/>
</dbReference>
<dbReference type="PROSITE" id="PS51379">
    <property type="entry name" value="4FE4S_FER_2"/>
    <property type="match status" value="2"/>
</dbReference>
<feature type="chain" id="PRO_1000013637" description="Ion-translocating oxidoreductase complex subunit B">
    <location>
        <begin position="1"/>
        <end position="183"/>
    </location>
</feature>
<feature type="domain" description="4Fe-4S" evidence="1">
    <location>
        <begin position="29"/>
        <end position="88"/>
    </location>
</feature>
<feature type="domain" description="4Fe-4S ferredoxin-type 1" evidence="1">
    <location>
        <begin position="104"/>
        <end position="133"/>
    </location>
</feature>
<feature type="domain" description="4Fe-4S ferredoxin-type 2" evidence="1">
    <location>
        <begin position="135"/>
        <end position="163"/>
    </location>
</feature>
<feature type="region of interest" description="Hydrophobic" evidence="1">
    <location>
        <begin position="1"/>
        <end position="23"/>
    </location>
</feature>
<feature type="binding site" evidence="1">
    <location>
        <position position="46"/>
    </location>
    <ligand>
        <name>[4Fe-4S] cluster</name>
        <dbReference type="ChEBI" id="CHEBI:49883"/>
        <label>1</label>
    </ligand>
</feature>
<feature type="binding site" evidence="1">
    <location>
        <position position="49"/>
    </location>
    <ligand>
        <name>[4Fe-4S] cluster</name>
        <dbReference type="ChEBI" id="CHEBI:49883"/>
        <label>1</label>
    </ligand>
</feature>
<feature type="binding site" evidence="1">
    <location>
        <position position="54"/>
    </location>
    <ligand>
        <name>[4Fe-4S] cluster</name>
        <dbReference type="ChEBI" id="CHEBI:49883"/>
        <label>1</label>
    </ligand>
</feature>
<feature type="binding site" evidence="1">
    <location>
        <position position="71"/>
    </location>
    <ligand>
        <name>[4Fe-4S] cluster</name>
        <dbReference type="ChEBI" id="CHEBI:49883"/>
        <label>1</label>
    </ligand>
</feature>
<feature type="binding site" evidence="1">
    <location>
        <position position="113"/>
    </location>
    <ligand>
        <name>[4Fe-4S] cluster</name>
        <dbReference type="ChEBI" id="CHEBI:49883"/>
        <label>2</label>
    </ligand>
</feature>
<feature type="binding site" evidence="1">
    <location>
        <position position="116"/>
    </location>
    <ligand>
        <name>[4Fe-4S] cluster</name>
        <dbReference type="ChEBI" id="CHEBI:49883"/>
        <label>2</label>
    </ligand>
</feature>
<feature type="binding site" evidence="1">
    <location>
        <position position="119"/>
    </location>
    <ligand>
        <name>[4Fe-4S] cluster</name>
        <dbReference type="ChEBI" id="CHEBI:49883"/>
        <label>2</label>
    </ligand>
</feature>
<feature type="binding site" evidence="1">
    <location>
        <position position="123"/>
    </location>
    <ligand>
        <name>[4Fe-4S] cluster</name>
        <dbReference type="ChEBI" id="CHEBI:49883"/>
        <label>3</label>
    </ligand>
</feature>
<feature type="binding site" evidence="1">
    <location>
        <position position="143"/>
    </location>
    <ligand>
        <name>[4Fe-4S] cluster</name>
        <dbReference type="ChEBI" id="CHEBI:49883"/>
        <label>3</label>
    </ligand>
</feature>
<feature type="binding site" evidence="1">
    <location>
        <position position="146"/>
    </location>
    <ligand>
        <name>[4Fe-4S] cluster</name>
        <dbReference type="ChEBI" id="CHEBI:49883"/>
        <label>3</label>
    </ligand>
</feature>
<feature type="binding site" evidence="1">
    <location>
        <position position="149"/>
    </location>
    <ligand>
        <name>[4Fe-4S] cluster</name>
        <dbReference type="ChEBI" id="CHEBI:49883"/>
        <label>3</label>
    </ligand>
</feature>
<feature type="binding site" evidence="1">
    <location>
        <position position="153"/>
    </location>
    <ligand>
        <name>[4Fe-4S] cluster</name>
        <dbReference type="ChEBI" id="CHEBI:49883"/>
        <label>2</label>
    </ligand>
</feature>
<comment type="function">
    <text evidence="1">Part of a membrane-bound complex that couples electron transfer with translocation of ions across the membrane.</text>
</comment>
<comment type="cofactor">
    <cofactor evidence="1">
        <name>[4Fe-4S] cluster</name>
        <dbReference type="ChEBI" id="CHEBI:49883"/>
    </cofactor>
    <text evidence="1">Binds 3 [4Fe-4S] clusters.</text>
</comment>
<comment type="subunit">
    <text evidence="1">The complex is composed of six subunits: RnfA, RnfB, RnfC, RnfD, RnfE and RnfG.</text>
</comment>
<comment type="subcellular location">
    <subcellularLocation>
        <location evidence="1">Cell inner membrane</location>
    </subcellularLocation>
</comment>
<comment type="similarity">
    <text evidence="1">Belongs to the 4Fe4S bacterial-type ferredoxin family. RnfB subfamily.</text>
</comment>
<accession>A1K5F2</accession>
<organism>
    <name type="scientific">Azoarcus sp. (strain BH72)</name>
    <dbReference type="NCBI Taxonomy" id="418699"/>
    <lineage>
        <taxon>Bacteria</taxon>
        <taxon>Pseudomonadati</taxon>
        <taxon>Pseudomonadota</taxon>
        <taxon>Betaproteobacteria</taxon>
        <taxon>Rhodocyclales</taxon>
        <taxon>Zoogloeaceae</taxon>
        <taxon>Azoarcus</taxon>
    </lineage>
</organism>
<gene>
    <name evidence="1" type="primary">rnfB</name>
    <name type="ordered locus">azo1440</name>
</gene>
<sequence>MLSALLVMAAIAVVLGAALGFAAIRFRVEGDPLVDKIDAILPQTQCGQCGYPGCKPYAQAIAQGEADINQCPPGGEEGVRKLADLLGREFKPLSAEHGEEKPKAVAYIDENVCIGCTLCLQACPVDAIVGAAKQMHTVVDPLCTGCELCVAPCPVDCIYMEPVRETVQTWRWKYPVVEIRKAA</sequence>
<reference key="1">
    <citation type="journal article" date="2006" name="Nat. Biotechnol.">
        <title>Complete genome of the mutualistic, N2-fixing grass endophyte Azoarcus sp. strain BH72.</title>
        <authorList>
            <person name="Krause A."/>
            <person name="Ramakumar A."/>
            <person name="Bartels D."/>
            <person name="Battistoni F."/>
            <person name="Bekel T."/>
            <person name="Boch J."/>
            <person name="Boehm M."/>
            <person name="Friedrich F."/>
            <person name="Hurek T."/>
            <person name="Krause L."/>
            <person name="Linke B."/>
            <person name="McHardy A.C."/>
            <person name="Sarkar A."/>
            <person name="Schneiker S."/>
            <person name="Syed A.A."/>
            <person name="Thauer R."/>
            <person name="Vorhoelter F.-J."/>
            <person name="Weidner S."/>
            <person name="Puehler A."/>
            <person name="Reinhold-Hurek B."/>
            <person name="Kaiser O."/>
            <person name="Goesmann A."/>
        </authorList>
    </citation>
    <scope>NUCLEOTIDE SEQUENCE [LARGE SCALE GENOMIC DNA]</scope>
    <source>
        <strain>BH72</strain>
    </source>
</reference>
<name>RNFB_AZOSB</name>
<proteinExistence type="inferred from homology"/>
<evidence type="ECO:0000255" key="1">
    <source>
        <dbReference type="HAMAP-Rule" id="MF_00463"/>
    </source>
</evidence>
<protein>
    <recommendedName>
        <fullName evidence="1">Ion-translocating oxidoreductase complex subunit B</fullName>
        <ecNumber evidence="1">7.-.-.-</ecNumber>
    </recommendedName>
    <alternativeName>
        <fullName evidence="1">Rnf electron transport complex subunit B</fullName>
    </alternativeName>
</protein>